<comment type="function">
    <text evidence="2 3 4 5 7 8 13 14">Cyclin-dependent protein kinase (CDK) inhibitor that functions as a repressor of mitosis in the endoreduplication cell cycle (PubMed:10952891, PubMed:11882294, PubMed:17098811, PubMed:17764505, PubMed:19717615, PubMed:20194967). Inhibits the kinase activity of CYCD3-1/CDKA-1, CYCD2-1/CDKA-1 and CYCB1-1/CDKB1-1 complexes in a dose dependent manner (PubMed:26546445). Cooperates with SMR1 and SMR2 to promote endoreplication during leaf development (PubMed:26546445). Required for normal trichome endoreplicating cell cycles (PubMed:10952891, PubMed:11882294, PubMed:17098811, PubMed:17764505, PubMed:19717615, PubMed:20194967). Positive regulator of effector-triggered immunity (ETI) (PubMed:25455564).</text>
</comment>
<comment type="subunit">
    <text evidence="4 9 13 14">Interacts with CDKA-1 (PubMed:17098811, PubMed:26546445). Interacts with CYCD2-1, CYCD3-2 and CYCD4-1 (PubMed:17098811). Interacts with CDKB1-1 (PubMed:20706207, PubMed:26546445). Interacts with CPR5 (PubMed:25455564).</text>
</comment>
<comment type="subcellular location">
    <subcellularLocation>
        <location evidence="4">Nucleus</location>
    </subcellularLocation>
</comment>
<comment type="tissue specificity">
    <text evidence="4 12">Expressed in the shoot apical meristem, leaf primordia and the elongation zone of the root.</text>
</comment>
<comment type="induction">
    <text evidence="6 11">Down-regulated by gibberellin (PubMed:19576768). Up-regulated by zeocin treatment (PubMed:21613568).</text>
</comment>
<comment type="disruption phenotype">
    <text evidence="2 3 4 5 7 8 10">Multicellular trichomes with nuclei showing reduced levels of endoreduplication.</text>
</comment>
<comment type="miscellaneous">
    <text evidence="17">Plants over-expressing SIM are dwarf with serrated leaves containing enlarged cells with increased levels of nuclear DNA.</text>
</comment>
<keyword id="KW-0131">Cell cycle</keyword>
<keyword id="KW-0539">Nucleus</keyword>
<keyword id="KW-0649">Protein kinase inhibitor</keyword>
<keyword id="KW-1185">Reference proteome</keyword>
<name>SIM_ARATH</name>
<sequence length="127" mass="14091">MDLDLIQDLPILNFPPAIKIRANTNRDDDGGGCTTPTSSDHKIPPTTATTPPPPPQKPRPPSTPSSLGIRSCKRKLMTSLSKYEIIVNKDEIERFFSSVYNQTMASSTTTAITVAKRRRSFRSCSRR</sequence>
<protein>
    <recommendedName>
        <fullName evidence="15 16">Cyclin-dependent protein kinase inhibitor SIM</fullName>
    </recommendedName>
    <alternativeName>
        <fullName>Protein SIAMESE</fullName>
    </alternativeName>
</protein>
<reference key="1">
    <citation type="journal article" date="2000" name="Nature">
        <title>Sequence and analysis of chromosome 5 of the plant Arabidopsis thaliana.</title>
        <authorList>
            <person name="Tabata S."/>
            <person name="Kaneko T."/>
            <person name="Nakamura Y."/>
            <person name="Kotani H."/>
            <person name="Kato T."/>
            <person name="Asamizu E."/>
            <person name="Miyajima N."/>
            <person name="Sasamoto S."/>
            <person name="Kimura T."/>
            <person name="Hosouchi T."/>
            <person name="Kawashima K."/>
            <person name="Kohara M."/>
            <person name="Matsumoto M."/>
            <person name="Matsuno A."/>
            <person name="Muraki A."/>
            <person name="Nakayama S."/>
            <person name="Nakazaki N."/>
            <person name="Naruo K."/>
            <person name="Okumura S."/>
            <person name="Shinpo S."/>
            <person name="Takeuchi C."/>
            <person name="Wada T."/>
            <person name="Watanabe A."/>
            <person name="Yamada M."/>
            <person name="Yasuda M."/>
            <person name="Sato S."/>
            <person name="de la Bastide M."/>
            <person name="Huang E."/>
            <person name="Spiegel L."/>
            <person name="Gnoj L."/>
            <person name="O'Shaughnessy A."/>
            <person name="Preston R."/>
            <person name="Habermann K."/>
            <person name="Murray J."/>
            <person name="Johnson D."/>
            <person name="Rohlfing T."/>
            <person name="Nelson J."/>
            <person name="Stoneking T."/>
            <person name="Pepin K."/>
            <person name="Spieth J."/>
            <person name="Sekhon M."/>
            <person name="Armstrong J."/>
            <person name="Becker M."/>
            <person name="Belter E."/>
            <person name="Cordum H."/>
            <person name="Cordes M."/>
            <person name="Courtney L."/>
            <person name="Courtney W."/>
            <person name="Dante M."/>
            <person name="Du H."/>
            <person name="Edwards J."/>
            <person name="Fryman J."/>
            <person name="Haakensen B."/>
            <person name="Lamar E."/>
            <person name="Latreille P."/>
            <person name="Leonard S."/>
            <person name="Meyer R."/>
            <person name="Mulvaney E."/>
            <person name="Ozersky P."/>
            <person name="Riley A."/>
            <person name="Strowmatt C."/>
            <person name="Wagner-McPherson C."/>
            <person name="Wollam A."/>
            <person name="Yoakum M."/>
            <person name="Bell M."/>
            <person name="Dedhia N."/>
            <person name="Parnell L."/>
            <person name="Shah R."/>
            <person name="Rodriguez M."/>
            <person name="Hoon See L."/>
            <person name="Vil D."/>
            <person name="Baker J."/>
            <person name="Kirchoff K."/>
            <person name="Toth K."/>
            <person name="King L."/>
            <person name="Bahret A."/>
            <person name="Miller B."/>
            <person name="Marra M.A."/>
            <person name="Martienssen R."/>
            <person name="McCombie W.R."/>
            <person name="Wilson R.K."/>
            <person name="Murphy G."/>
            <person name="Bancroft I."/>
            <person name="Volckaert G."/>
            <person name="Wambutt R."/>
            <person name="Duesterhoeft A."/>
            <person name="Stiekema W."/>
            <person name="Pohl T."/>
            <person name="Entian K.-D."/>
            <person name="Terryn N."/>
            <person name="Hartley N."/>
            <person name="Bent E."/>
            <person name="Johnson S."/>
            <person name="Langham S.-A."/>
            <person name="McCullagh B."/>
            <person name="Robben J."/>
            <person name="Grymonprez B."/>
            <person name="Zimmermann W."/>
            <person name="Ramsperger U."/>
            <person name="Wedler H."/>
            <person name="Balke K."/>
            <person name="Wedler E."/>
            <person name="Peters S."/>
            <person name="van Staveren M."/>
            <person name="Dirkse W."/>
            <person name="Mooijman P."/>
            <person name="Klein Lankhorst R."/>
            <person name="Weitzenegger T."/>
            <person name="Bothe G."/>
            <person name="Rose M."/>
            <person name="Hauf J."/>
            <person name="Berneiser S."/>
            <person name="Hempel S."/>
            <person name="Feldpausch M."/>
            <person name="Lamberth S."/>
            <person name="Villarroel R."/>
            <person name="Gielen J."/>
            <person name="Ardiles W."/>
            <person name="Bents O."/>
            <person name="Lemcke K."/>
            <person name="Kolesov G."/>
            <person name="Mayer K.F.X."/>
            <person name="Rudd S."/>
            <person name="Schoof H."/>
            <person name="Schueller C."/>
            <person name="Zaccaria P."/>
            <person name="Mewes H.-W."/>
            <person name="Bevan M."/>
            <person name="Fransz P.F."/>
        </authorList>
    </citation>
    <scope>NUCLEOTIDE SEQUENCE [LARGE SCALE GENOMIC DNA]</scope>
    <source>
        <strain>cv. Columbia</strain>
    </source>
</reference>
<reference key="2">
    <citation type="journal article" date="2017" name="Plant J.">
        <title>Araport11: a complete reannotation of the Arabidopsis thaliana reference genome.</title>
        <authorList>
            <person name="Cheng C.Y."/>
            <person name="Krishnakumar V."/>
            <person name="Chan A.P."/>
            <person name="Thibaud-Nissen F."/>
            <person name="Schobel S."/>
            <person name="Town C.D."/>
        </authorList>
    </citation>
    <scope>GENOME REANNOTATION</scope>
    <source>
        <strain>cv. Columbia</strain>
    </source>
</reference>
<reference key="3">
    <citation type="journal article" date="2003" name="Science">
        <title>Empirical analysis of transcriptional activity in the Arabidopsis genome.</title>
        <authorList>
            <person name="Yamada K."/>
            <person name="Lim J."/>
            <person name="Dale J.M."/>
            <person name="Chen H."/>
            <person name="Shinn P."/>
            <person name="Palm C.J."/>
            <person name="Southwick A.M."/>
            <person name="Wu H.C."/>
            <person name="Kim C.J."/>
            <person name="Nguyen M."/>
            <person name="Pham P.K."/>
            <person name="Cheuk R.F."/>
            <person name="Karlin-Newmann G."/>
            <person name="Liu S.X."/>
            <person name="Lam B."/>
            <person name="Sakano H."/>
            <person name="Wu T."/>
            <person name="Yu G."/>
            <person name="Miranda M."/>
            <person name="Quach H.L."/>
            <person name="Tripp M."/>
            <person name="Chang C.H."/>
            <person name="Lee J.M."/>
            <person name="Toriumi M.J."/>
            <person name="Chan M.M."/>
            <person name="Tang C.C."/>
            <person name="Onodera C.S."/>
            <person name="Deng J.M."/>
            <person name="Akiyama K."/>
            <person name="Ansari Y."/>
            <person name="Arakawa T."/>
            <person name="Banh J."/>
            <person name="Banno F."/>
            <person name="Bowser L."/>
            <person name="Brooks S.Y."/>
            <person name="Carninci P."/>
            <person name="Chao Q."/>
            <person name="Choy N."/>
            <person name="Enju A."/>
            <person name="Goldsmith A.D."/>
            <person name="Gurjal M."/>
            <person name="Hansen N.F."/>
            <person name="Hayashizaki Y."/>
            <person name="Johnson-Hopson C."/>
            <person name="Hsuan V.W."/>
            <person name="Iida K."/>
            <person name="Karnes M."/>
            <person name="Khan S."/>
            <person name="Koesema E."/>
            <person name="Ishida J."/>
            <person name="Jiang P.X."/>
            <person name="Jones T."/>
            <person name="Kawai J."/>
            <person name="Kamiya A."/>
            <person name="Meyers C."/>
            <person name="Nakajima M."/>
            <person name="Narusaka M."/>
            <person name="Seki M."/>
            <person name="Sakurai T."/>
            <person name="Satou M."/>
            <person name="Tamse R."/>
            <person name="Vaysberg M."/>
            <person name="Wallender E.K."/>
            <person name="Wong C."/>
            <person name="Yamamura Y."/>
            <person name="Yuan S."/>
            <person name="Shinozaki K."/>
            <person name="Davis R.W."/>
            <person name="Theologis A."/>
            <person name="Ecker J.R."/>
        </authorList>
    </citation>
    <scope>NUCLEOTIDE SEQUENCE [LARGE SCALE MRNA]</scope>
    <source>
        <strain>cv. Columbia</strain>
    </source>
</reference>
<reference key="4">
    <citation type="submission" date="2002-03" db="EMBL/GenBank/DDBJ databases">
        <title>Full-length cDNA from Arabidopsis thaliana.</title>
        <authorList>
            <person name="Brover V.V."/>
            <person name="Troukhan M.E."/>
            <person name="Alexandrov N.A."/>
            <person name="Lu Y.-P."/>
            <person name="Flavell R.B."/>
            <person name="Feldmann K.A."/>
        </authorList>
    </citation>
    <scope>NUCLEOTIDE SEQUENCE [LARGE SCALE MRNA]</scope>
</reference>
<reference key="5">
    <citation type="submission" date="2004-09" db="EMBL/GenBank/DDBJ databases">
        <title>Large-scale analysis of RIKEN Arabidopsis full-length (RAFL) cDNAs.</title>
        <authorList>
            <person name="Totoki Y."/>
            <person name="Seki M."/>
            <person name="Ishida J."/>
            <person name="Nakajima M."/>
            <person name="Enju A."/>
            <person name="Kamiya A."/>
            <person name="Narusaka M."/>
            <person name="Shin-i T."/>
            <person name="Nakagawa M."/>
            <person name="Sakamoto N."/>
            <person name="Oishi K."/>
            <person name="Kohara Y."/>
            <person name="Kobayashi M."/>
            <person name="Toyoda A."/>
            <person name="Sakaki Y."/>
            <person name="Sakurai T."/>
            <person name="Iida K."/>
            <person name="Akiyama K."/>
            <person name="Satou M."/>
            <person name="Toyoda T."/>
            <person name="Konagaya A."/>
            <person name="Carninci P."/>
            <person name="Kawai J."/>
            <person name="Hayashizaki Y."/>
            <person name="Shinozaki K."/>
        </authorList>
    </citation>
    <scope>NUCLEOTIDE SEQUENCE [LARGE SCALE MRNA] OF 73-127</scope>
    <source>
        <strain>cv. Columbia</strain>
    </source>
</reference>
<reference key="6">
    <citation type="journal article" date="2000" name="Development">
        <title>SIAMESE, a gene controlling the endoreduplication cell cycle in Arabidopsis thaliana trichomes.</title>
        <authorList>
            <person name="Walker J.D."/>
            <person name="Oppenheimer D.G."/>
            <person name="Concienne J."/>
            <person name="Larkin J.C."/>
        </authorList>
    </citation>
    <scope>FUNCTION</scope>
    <scope>DISRUPTION PHENOTYPE</scope>
</reference>
<reference key="7">
    <citation type="journal article" date="2002" name="Curr. Biol.">
        <title>Ectopic B-type cyclin expression induces mitotic cycles in endoreduplicating Arabidopsis trichomes.</title>
        <authorList>
            <person name="Schnittger A."/>
            <person name="Schoebinger U."/>
            <person name="Stierhof Y.-D."/>
            <person name="Huelskamp M."/>
        </authorList>
    </citation>
    <scope>FUNCTION</scope>
    <scope>DISRUPTION PHENOTYPE</scope>
</reference>
<reference key="8">
    <citation type="journal article" date="2006" name="Plant Cell">
        <title>SIAMESE, a plant-specific cell cycle regulator, controls endoreplication onset in Arabidopsis thaliana.</title>
        <authorList>
            <person name="Churchman M.L."/>
            <person name="Brown M.L."/>
            <person name="Kato N."/>
            <person name="Kirik V."/>
            <person name="Huelskamp M."/>
            <person name="Inze D."/>
            <person name="De Veylder L."/>
            <person name="Walker J.D."/>
            <person name="Zheng Z."/>
            <person name="Oppenheimer D.G."/>
            <person name="Gwin T."/>
            <person name="Churchman J."/>
            <person name="Larkin J.C."/>
        </authorList>
    </citation>
    <scope>FUNCTION</scope>
    <scope>INTERACTION WITH CDKA-1; CYCD2-1; CYCD3-2 AND CYCD4-1</scope>
    <scope>SUBCELLULAR LOCATION</scope>
    <scope>TISSUE SPECIFICITY</scope>
    <scope>DISRUPTION PHENOTYPE</scope>
</reference>
<reference key="9">
    <citation type="journal article" date="2007" name="Plant J.">
        <title>Genetic interaction between glabra3-shapeshifter and siamese in Arabidopsis thaliana converts trichome precursors into cells with meristematic activity.</title>
        <authorList>
            <person name="Marks M.D."/>
            <person name="Gilding E."/>
            <person name="Wenger J.P."/>
        </authorList>
    </citation>
    <scope>FUNCTION</scope>
    <scope>DISRUPTION PHENOTYPE</scope>
</reference>
<reference key="10">
    <citation type="journal article" date="2009" name="Curr. Biol.">
        <title>Gibberellin signaling controls cell proliferation rate in Arabidopsis.</title>
        <authorList>
            <person name="Achard P."/>
            <person name="Gusti A."/>
            <person name="Cheminant S."/>
            <person name="Alioua M."/>
            <person name="Dhondt S."/>
            <person name="Coppens F."/>
            <person name="Beemster G.T."/>
            <person name="Genschik P."/>
        </authorList>
    </citation>
    <scope>INDUCTION</scope>
</reference>
<reference key="11">
    <citation type="journal article" date="2009" name="Plant Cell">
        <title>The trihelix transcription factor GTL1 regulates ploidy-dependent cell growth in the Arabidopsis trichome.</title>
        <authorList>
            <person name="Breuer C."/>
            <person name="Kawamura A."/>
            <person name="Ichikawa T."/>
            <person name="Tominaga-Wada R."/>
            <person name="Wada T."/>
            <person name="Kondou Y."/>
            <person name="Muto S."/>
            <person name="Matsui M."/>
            <person name="Sugimoto K."/>
        </authorList>
    </citation>
    <scope>FUNCTION</scope>
    <scope>DISRUPTION PHENOTYPE</scope>
</reference>
<reference key="12">
    <citation type="journal article" date="2010" name="Genetics">
        <title>SIAMESE cooperates with the CDH1-like protein CCS52A1 to establish endoreplication in Arabidopsis thaliana trichomes.</title>
        <authorList>
            <person name="Kasili R."/>
            <person name="Walker J.D."/>
            <person name="Simmons L.A."/>
            <person name="Zhou J."/>
            <person name="De Veylder L."/>
            <person name="Larkin J.C."/>
        </authorList>
    </citation>
    <scope>FUNCTION</scope>
    <scope>DISRUPTION PHENOTYPE</scope>
</reference>
<reference key="13">
    <citation type="journal article" date="2010" name="Mol. Syst. Biol.">
        <title>Targeted interactomics reveals a complex core cell cycle machinery in Arabidopsis thaliana.</title>
        <authorList>
            <person name="Van Leene J."/>
            <person name="Hollunder J."/>
            <person name="Eeckhout D."/>
            <person name="Persiau G."/>
            <person name="Van De Slijke E."/>
            <person name="Stals H."/>
            <person name="Van Isterdael G."/>
            <person name="Verkest A."/>
            <person name="Neirynck S."/>
            <person name="Buffel Y."/>
            <person name="De Bodt S."/>
            <person name="Maere S."/>
            <person name="Laukens K."/>
            <person name="Pharazyn A."/>
            <person name="Ferreira P.C.G."/>
            <person name="Eloy N."/>
            <person name="Renne C."/>
            <person name="Meyer C."/>
            <person name="Faure J.-D."/>
            <person name="Steinbrenner J."/>
            <person name="Beynon J."/>
            <person name="Larkin J.C."/>
            <person name="Van de Peer Y."/>
            <person name="Hilson P."/>
            <person name="Kuiper M."/>
            <person name="De Veylder L."/>
            <person name="Van Onckelen H."/>
            <person name="Inze D."/>
            <person name="Witters E."/>
            <person name="De Jaeger G."/>
        </authorList>
    </citation>
    <scope>INTERACTION WITH CDKB1-1</scope>
</reference>
<reference key="14">
    <citation type="journal article" date="2011" name="Development">
        <title>BRANCHLESS TRICHOMES links cell shape and cell cycle control in Arabidopsis trichomes.</title>
        <authorList>
            <person name="Kasili R."/>
            <person name="Huang C.C."/>
            <person name="Walker J.D."/>
            <person name="Simmons L.A."/>
            <person name="Zhou J."/>
            <person name="Faulk C."/>
            <person name="Huelskamp M."/>
            <person name="Larkin J.C."/>
        </authorList>
    </citation>
    <scope>DISRUPTION PHENOTYPE</scope>
</reference>
<reference key="15">
    <citation type="journal article" date="2011" name="Proc. Natl. Acad. Sci. U.S.A.">
        <title>Programmed induction of endoreduplication by DNA double-strand breaks in Arabidopsis.</title>
        <authorList>
            <person name="Adachi S."/>
            <person name="Minamisawa K."/>
            <person name="Okushima Y."/>
            <person name="Inagaki S."/>
            <person name="Yoshiyama K."/>
            <person name="Kondou Y."/>
            <person name="Kaminuma E."/>
            <person name="Kawashima M."/>
            <person name="Toyoda T."/>
            <person name="Matsui M."/>
            <person name="Kurihara D."/>
            <person name="Matsunaga S."/>
            <person name="Umeda M."/>
        </authorList>
    </citation>
    <scope>INDUCTION BY ZEOCIN</scope>
</reference>
<reference key="16">
    <citation type="journal article" date="2014" name="Cell Host Microbe">
        <title>A noncanonical role for the CKI-RB-E2F cell-cycle signaling pathway in plant effector-triggered immunity.</title>
        <authorList>
            <person name="Wang S."/>
            <person name="Gu Y."/>
            <person name="Zebell S.G."/>
            <person name="Anderson L.K."/>
            <person name="Wang W."/>
            <person name="Mohan R."/>
            <person name="Dong X."/>
        </authorList>
    </citation>
    <scope>FUNCTION</scope>
    <scope>INTERACTION WITH CPR5</scope>
</reference>
<reference key="17">
    <citation type="journal article" date="2014" name="Plant Cell">
        <title>The Arabidopsis SIAMESE-RELATED cyclin-dependent kinase inhibitors SMR5 and SMR7 regulate the DNA damage checkpoint in response to reactive oxygen species.</title>
        <authorList>
            <person name="Yi D."/>
            <person name="Alvim Kamei C.L."/>
            <person name="Cools T."/>
            <person name="Vanderauwera S."/>
            <person name="Takahashi N."/>
            <person name="Okushima Y."/>
            <person name="Eekhout T."/>
            <person name="Yoshiyama K.O."/>
            <person name="Larkin J."/>
            <person name="Van den Daele H."/>
            <person name="Conklin P."/>
            <person name="Britt A."/>
            <person name="Umeda M."/>
            <person name="De Veylder L."/>
        </authorList>
    </citation>
    <scope>TISSUE SPECIFICITY</scope>
    <scope>GENE FAMILY</scope>
    <scope>NOMENCLATURE</scope>
</reference>
<reference key="18">
    <citation type="journal article" date="2015" name="Plant Cell">
        <title>Functional conservation in the SIAMESE-RELATED family of cyclin-dependent kinase inhibitors in land plants.</title>
        <authorList>
            <person name="Kumar N."/>
            <person name="Harashima H."/>
            <person name="Kalve S."/>
            <person name="Bramsiepe J."/>
            <person name="Wang K."/>
            <person name="Sizani B.L."/>
            <person name="Bertrand L.L."/>
            <person name="Johnson M.C."/>
            <person name="Faulk C."/>
            <person name="Dale R."/>
            <person name="Simmons L.A."/>
            <person name="Churchman M.L."/>
            <person name="Sugimoto K."/>
            <person name="Kato N."/>
            <person name="Dasanayake M."/>
            <person name="Beemster G."/>
            <person name="Schnittger A."/>
            <person name="Larkin J.C."/>
        </authorList>
    </citation>
    <scope>FUNCTION</scope>
    <scope>GENE FAMILY</scope>
    <scope>NOMENCLATURE</scope>
    <scope>INTERACTION WITH CDKA-1 AND CDKB1-1</scope>
</reference>
<organism>
    <name type="scientific">Arabidopsis thaliana</name>
    <name type="common">Mouse-ear cress</name>
    <dbReference type="NCBI Taxonomy" id="3702"/>
    <lineage>
        <taxon>Eukaryota</taxon>
        <taxon>Viridiplantae</taxon>
        <taxon>Streptophyta</taxon>
        <taxon>Embryophyta</taxon>
        <taxon>Tracheophyta</taxon>
        <taxon>Spermatophyta</taxon>
        <taxon>Magnoliopsida</taxon>
        <taxon>eudicotyledons</taxon>
        <taxon>Gunneridae</taxon>
        <taxon>Pentapetalae</taxon>
        <taxon>rosids</taxon>
        <taxon>malvids</taxon>
        <taxon>Brassicales</taxon>
        <taxon>Brassicaceae</taxon>
        <taxon>Camelineae</taxon>
        <taxon>Arabidopsis</taxon>
    </lineage>
</organism>
<gene>
    <name evidence="15 16" type="primary">SIM</name>
    <name evidence="18" type="ordered locus">At5g04470</name>
    <name evidence="19" type="ORF">T32M21.70</name>
</gene>
<dbReference type="EMBL" id="AL162875">
    <property type="protein sequence ID" value="CAB85553.1"/>
    <property type="molecule type" value="Genomic_DNA"/>
</dbReference>
<dbReference type="EMBL" id="CP002688">
    <property type="protein sequence ID" value="AED90749.1"/>
    <property type="molecule type" value="Genomic_DNA"/>
</dbReference>
<dbReference type="EMBL" id="BT009698">
    <property type="protein sequence ID" value="AAP88332.1"/>
    <property type="molecule type" value="mRNA"/>
</dbReference>
<dbReference type="EMBL" id="AY085204">
    <property type="protein sequence ID" value="AAM61754.1"/>
    <property type="molecule type" value="mRNA"/>
</dbReference>
<dbReference type="EMBL" id="AK175850">
    <property type="protein sequence ID" value="BAD43613.1"/>
    <property type="molecule type" value="mRNA"/>
</dbReference>
<dbReference type="PIR" id="T48443">
    <property type="entry name" value="T48443"/>
</dbReference>
<dbReference type="RefSeq" id="NP_196067.1">
    <property type="nucleotide sequence ID" value="NM_120529.3"/>
</dbReference>
<dbReference type="BioGRID" id="15605">
    <property type="interactions" value="7"/>
</dbReference>
<dbReference type="FunCoup" id="Q9LZ78">
    <property type="interactions" value="5"/>
</dbReference>
<dbReference type="IntAct" id="Q9LZ78">
    <property type="interactions" value="10"/>
</dbReference>
<dbReference type="STRING" id="3702.Q9LZ78"/>
<dbReference type="GlyGen" id="Q9LZ78">
    <property type="glycosylation" value="1 site"/>
</dbReference>
<dbReference type="PaxDb" id="3702-AT5G04470.1"/>
<dbReference type="ProteomicsDB" id="234580"/>
<dbReference type="EnsemblPlants" id="AT5G04470.1">
    <property type="protein sequence ID" value="AT5G04470.1"/>
    <property type="gene ID" value="AT5G04470"/>
</dbReference>
<dbReference type="GeneID" id="830326"/>
<dbReference type="Gramene" id="AT5G04470.1">
    <property type="protein sequence ID" value="AT5G04470.1"/>
    <property type="gene ID" value="AT5G04470"/>
</dbReference>
<dbReference type="KEGG" id="ath:AT5G04470"/>
<dbReference type="Araport" id="AT5G04470"/>
<dbReference type="TAIR" id="AT5G04470">
    <property type="gene designation" value="SIM"/>
</dbReference>
<dbReference type="eggNOG" id="ENOG502R1UX">
    <property type="taxonomic scope" value="Eukaryota"/>
</dbReference>
<dbReference type="HOGENOM" id="CLU_130615_0_0_1"/>
<dbReference type="InParanoid" id="Q9LZ78"/>
<dbReference type="OMA" id="PAIKIRT"/>
<dbReference type="PhylomeDB" id="Q9LZ78"/>
<dbReference type="PRO" id="PR:Q9LZ78"/>
<dbReference type="Proteomes" id="UP000006548">
    <property type="component" value="Chromosome 5"/>
</dbReference>
<dbReference type="ExpressionAtlas" id="Q9LZ78">
    <property type="expression patterns" value="baseline and differential"/>
</dbReference>
<dbReference type="GO" id="GO:0005634">
    <property type="term" value="C:nucleus"/>
    <property type="evidence" value="ECO:0000314"/>
    <property type="project" value="TAIR"/>
</dbReference>
<dbReference type="GO" id="GO:0004861">
    <property type="term" value="F:cyclin-dependent protein serine/threonine kinase inhibitor activity"/>
    <property type="evidence" value="ECO:0000303"/>
    <property type="project" value="TAIR"/>
</dbReference>
<dbReference type="GO" id="GO:0042023">
    <property type="term" value="P:DNA endoreduplication"/>
    <property type="evidence" value="ECO:0000315"/>
    <property type="project" value="TAIR"/>
</dbReference>
<dbReference type="GO" id="GO:0045786">
    <property type="term" value="P:negative regulation of cell cycle"/>
    <property type="evidence" value="ECO:0000315"/>
    <property type="project" value="TAIR"/>
</dbReference>
<dbReference type="GO" id="GO:0045736">
    <property type="term" value="P:negative regulation of cyclin-dependent protein serine/threonine kinase activity"/>
    <property type="evidence" value="ECO:0000303"/>
    <property type="project" value="TAIR"/>
</dbReference>
<dbReference type="GO" id="GO:0045839">
    <property type="term" value="P:negative regulation of mitotic nuclear division"/>
    <property type="evidence" value="ECO:0000315"/>
    <property type="project" value="TAIR"/>
</dbReference>
<dbReference type="GO" id="GO:0032875">
    <property type="term" value="P:regulation of DNA endoreduplication"/>
    <property type="evidence" value="ECO:0007669"/>
    <property type="project" value="InterPro"/>
</dbReference>
<dbReference type="GO" id="GO:0010026">
    <property type="term" value="P:trichome differentiation"/>
    <property type="evidence" value="ECO:0000315"/>
    <property type="project" value="TAIR"/>
</dbReference>
<dbReference type="InterPro" id="IPR040389">
    <property type="entry name" value="SMR"/>
</dbReference>
<dbReference type="PANTHER" id="PTHR33142:SF60">
    <property type="entry name" value="CYCLIN-DEPENDENT PROTEIN KINASE INHIBITOR SIM"/>
    <property type="match status" value="1"/>
</dbReference>
<dbReference type="PANTHER" id="PTHR33142">
    <property type="entry name" value="CYCLIN-DEPENDENT PROTEIN KINASE INHIBITOR SMR13"/>
    <property type="match status" value="1"/>
</dbReference>
<accession>Q9LZ78</accession>
<accession>Q680L7</accession>
<evidence type="ECO:0000256" key="1">
    <source>
        <dbReference type="SAM" id="MobiDB-lite"/>
    </source>
</evidence>
<evidence type="ECO:0000269" key="2">
    <source>
    </source>
</evidence>
<evidence type="ECO:0000269" key="3">
    <source>
    </source>
</evidence>
<evidence type="ECO:0000269" key="4">
    <source>
    </source>
</evidence>
<evidence type="ECO:0000269" key="5">
    <source>
    </source>
</evidence>
<evidence type="ECO:0000269" key="6">
    <source>
    </source>
</evidence>
<evidence type="ECO:0000269" key="7">
    <source>
    </source>
</evidence>
<evidence type="ECO:0000269" key="8">
    <source>
    </source>
</evidence>
<evidence type="ECO:0000269" key="9">
    <source>
    </source>
</evidence>
<evidence type="ECO:0000269" key="10">
    <source>
    </source>
</evidence>
<evidence type="ECO:0000269" key="11">
    <source>
    </source>
</evidence>
<evidence type="ECO:0000269" key="12">
    <source>
    </source>
</evidence>
<evidence type="ECO:0000269" key="13">
    <source>
    </source>
</evidence>
<evidence type="ECO:0000269" key="14">
    <source>
    </source>
</evidence>
<evidence type="ECO:0000303" key="15">
    <source>
    </source>
</evidence>
<evidence type="ECO:0000303" key="16">
    <source>
    </source>
</evidence>
<evidence type="ECO:0000305" key="17">
    <source>
    </source>
</evidence>
<evidence type="ECO:0000312" key="18">
    <source>
        <dbReference type="Araport" id="AT5G04470"/>
    </source>
</evidence>
<evidence type="ECO:0000312" key="19">
    <source>
        <dbReference type="EMBL" id="CAB85553.1"/>
    </source>
</evidence>
<feature type="chain" id="PRO_0000418063" description="Cyclin-dependent protein kinase inhibitor SIM">
    <location>
        <begin position="1"/>
        <end position="127"/>
    </location>
</feature>
<feature type="region of interest" description="Disordered" evidence="1">
    <location>
        <begin position="21"/>
        <end position="71"/>
    </location>
</feature>
<feature type="compositionally biased region" description="Pro residues" evidence="1">
    <location>
        <begin position="50"/>
        <end position="63"/>
    </location>
</feature>
<proteinExistence type="evidence at protein level"/>